<dbReference type="EMBL" id="AF156878">
    <property type="protein sequence ID" value="AAF25002.1"/>
    <property type="molecule type" value="mRNA"/>
</dbReference>
<dbReference type="FunCoup" id="Q9QXY4">
    <property type="interactions" value="928"/>
</dbReference>
<dbReference type="STRING" id="10116.ENSRNOP00000073386"/>
<dbReference type="GlyGen" id="Q9QXY4">
    <property type="glycosylation" value="1 site"/>
</dbReference>
<dbReference type="iPTMnet" id="Q9QXY4"/>
<dbReference type="PhosphoSitePlus" id="Q9QXY4"/>
<dbReference type="jPOST" id="Q9QXY4"/>
<dbReference type="PaxDb" id="10116-ENSRNOP00000012612"/>
<dbReference type="UCSC" id="RGD:69324">
    <property type="organism name" value="rat"/>
</dbReference>
<dbReference type="AGR" id="RGD:69324"/>
<dbReference type="RGD" id="69324">
    <property type="gene designation" value="Ogfr"/>
</dbReference>
<dbReference type="eggNOG" id="ENOG502QVIF">
    <property type="taxonomic scope" value="Eukaryota"/>
</dbReference>
<dbReference type="InParanoid" id="Q9QXY4"/>
<dbReference type="PhylomeDB" id="Q9QXY4"/>
<dbReference type="PRO" id="PR:Q9QXY4"/>
<dbReference type="Proteomes" id="UP000002494">
    <property type="component" value="Unplaced"/>
</dbReference>
<dbReference type="GO" id="GO:0016020">
    <property type="term" value="C:membrane"/>
    <property type="evidence" value="ECO:0007669"/>
    <property type="project" value="InterPro"/>
</dbReference>
<dbReference type="GO" id="GO:0005634">
    <property type="term" value="C:nucleus"/>
    <property type="evidence" value="ECO:0007669"/>
    <property type="project" value="UniProtKB-SubCell"/>
</dbReference>
<dbReference type="GO" id="GO:0048471">
    <property type="term" value="C:perinuclear region of cytoplasm"/>
    <property type="evidence" value="ECO:0007669"/>
    <property type="project" value="UniProtKB-SubCell"/>
</dbReference>
<dbReference type="GO" id="GO:0140625">
    <property type="term" value="F:opioid growth factor receptor activity"/>
    <property type="evidence" value="ECO:0007669"/>
    <property type="project" value="InterPro"/>
</dbReference>
<dbReference type="InterPro" id="IPR006757">
    <property type="entry name" value="OGF_rcpt"/>
</dbReference>
<dbReference type="InterPro" id="IPR039574">
    <property type="entry name" value="OGFr"/>
</dbReference>
<dbReference type="PANTHER" id="PTHR14015:SF1">
    <property type="entry name" value="OPIOID GROWTH FACTOR RECEPTOR"/>
    <property type="match status" value="1"/>
</dbReference>
<dbReference type="PANTHER" id="PTHR14015">
    <property type="entry name" value="OPIOID GROWTH FACTOR RECEPTOR OGFR ZETA-TYPE OPIOID RECEPTOR"/>
    <property type="match status" value="1"/>
</dbReference>
<dbReference type="Pfam" id="PF04664">
    <property type="entry name" value="OGFr_N"/>
    <property type="match status" value="1"/>
</dbReference>
<evidence type="ECO:0000250" key="1">
    <source>
        <dbReference type="UniProtKB" id="Q99PG2"/>
    </source>
</evidence>
<evidence type="ECO:0000250" key="2">
    <source>
        <dbReference type="UniProtKB" id="Q9NZT2"/>
    </source>
</evidence>
<evidence type="ECO:0000255" key="3"/>
<evidence type="ECO:0000256" key="4">
    <source>
        <dbReference type="SAM" id="MobiDB-lite"/>
    </source>
</evidence>
<evidence type="ECO:0000269" key="5">
    <source>
    </source>
</evidence>
<evidence type="ECO:0000305" key="6"/>
<evidence type="ECO:0007744" key="7">
    <source>
    </source>
</evidence>
<sequence length="580" mass="64728">MDDPDCDSTWEEESEEDGEDGQADDTTDEDTGDDDGDAEEARPSLFQSRMTGYRNWRAMQDMQRYRHNYPDLTDQDCNGDMCNLSFYKNEICFQPNGALIEDILQNWKDNYDLLEENHSYIQWLFPLREPGVNWHAKPLTLKEVEAFKSSKEVRERLVRAYELMLGFYGFHLEDRGTGAVCRAQNFQPRFHNLNSHSHNNLRITRILKSLGELGLEHYQAPLVRFFLEETLVQHKLPSVRQSALDYFLFAVRCRHQRRELVYFAWEHFKPRREFVWGPRDKLRRFKPQTIPQPLTGPGQADKDEGSRDPSQEAGTQGRTCGSGRDLSGDSGTAEDPSLLNTKPSDGGTLDGNQRDEAKSLSPKESKKRKLEGNRQEQVPGEADPQGVSEVEKIALNLEECALSPISQEPREAEPPCPVARVANEVRKRRKVEEGAEGDGVVSNTQMQASALPPTPSECPEAQKDGNGPEDSNSQVGAEDSKSQVGPEDPNSQVGLEDPNSQVGPEDPNSQVGPEDPNSQVGPEDPNSQVGPEDPNSQVVGPEQAASKSPVEDPDSDTMGTSVDESEELARIEASAEPPKP</sequence>
<reference key="1">
    <citation type="journal article" date="1999" name="Brain Res.">
        <title>Cloning, sequencing, expression and function of a cDNA encoding a receptor for the opioid growth factor, [Met(5)]enkephalin.</title>
        <authorList>
            <person name="Zagon I.S."/>
            <person name="Verderame M.F."/>
            <person name="Allen S.S."/>
            <person name="McLaughlin P.J."/>
        </authorList>
    </citation>
    <scope>NUCLEOTIDE SEQUENCE [MRNA]</scope>
    <source>
        <strain>Sprague-Dawley</strain>
        <tissue>Brain</tissue>
    </source>
</reference>
<reference key="2">
    <citation type="journal article" date="2002" name="Brain Res. Brain Res. Rev.">
        <title>The biology of the opioid growth factor receptor (OGFr).</title>
        <authorList>
            <person name="Zagon I.S."/>
            <person name="Verderame M.F."/>
            <person name="McLaughlin P.J."/>
        </authorList>
    </citation>
    <scope>SUBCELLULAR LOCATION</scope>
    <scope>TISSUE SPECIFICITY</scope>
    <scope>REVIEW</scope>
</reference>
<reference key="3">
    <citation type="journal article" date="2012" name="Nat. Commun.">
        <title>Quantitative maps of protein phosphorylation sites across 14 different rat organs and tissues.</title>
        <authorList>
            <person name="Lundby A."/>
            <person name="Secher A."/>
            <person name="Lage K."/>
            <person name="Nordsborg N.B."/>
            <person name="Dmytriyev A."/>
            <person name="Lundby C."/>
            <person name="Olsen J.V."/>
        </authorList>
    </citation>
    <scope>PHOSPHORYLATION [LARGE SCALE ANALYSIS] AT SER-403 AND SER-548</scope>
    <scope>IDENTIFICATION BY MASS SPECTROMETRY [LARGE SCALE ANALYSIS]</scope>
</reference>
<accession>Q9QXY4</accession>
<name>OGFR_RAT</name>
<keyword id="KW-0007">Acetylation</keyword>
<keyword id="KW-0963">Cytoplasm</keyword>
<keyword id="KW-0341">Growth regulation</keyword>
<keyword id="KW-0539">Nucleus</keyword>
<keyword id="KW-0597">Phosphoprotein</keyword>
<keyword id="KW-0675">Receptor</keyword>
<keyword id="KW-1185">Reference proteome</keyword>
<keyword id="KW-0677">Repeat</keyword>
<organism>
    <name type="scientific">Rattus norvegicus</name>
    <name type="common">Rat</name>
    <dbReference type="NCBI Taxonomy" id="10116"/>
    <lineage>
        <taxon>Eukaryota</taxon>
        <taxon>Metazoa</taxon>
        <taxon>Chordata</taxon>
        <taxon>Craniata</taxon>
        <taxon>Vertebrata</taxon>
        <taxon>Euteleostomi</taxon>
        <taxon>Mammalia</taxon>
        <taxon>Eutheria</taxon>
        <taxon>Euarchontoglires</taxon>
        <taxon>Glires</taxon>
        <taxon>Rodentia</taxon>
        <taxon>Myomorpha</taxon>
        <taxon>Muroidea</taxon>
        <taxon>Muridae</taxon>
        <taxon>Murinae</taxon>
        <taxon>Rattus</taxon>
    </lineage>
</organism>
<protein>
    <recommendedName>
        <fullName>Opioid growth factor receptor</fullName>
        <shortName>OGFr</shortName>
    </recommendedName>
    <alternativeName>
        <fullName>Zeta-type opioid receptor</fullName>
    </alternativeName>
</protein>
<feature type="chain" id="PRO_0000058032" description="Opioid growth factor receptor">
    <location>
        <begin position="1"/>
        <end position="580"/>
    </location>
</feature>
<feature type="repeat" description="1">
    <location>
        <begin position="467"/>
        <end position="475"/>
    </location>
</feature>
<feature type="repeat" description="2">
    <location>
        <begin position="476"/>
        <end position="484"/>
    </location>
</feature>
<feature type="repeat" description="3">
    <location>
        <begin position="485"/>
        <end position="493"/>
    </location>
</feature>
<feature type="repeat" description="4">
    <location>
        <begin position="494"/>
        <end position="502"/>
    </location>
</feature>
<feature type="repeat" description="5">
    <location>
        <begin position="503"/>
        <end position="511"/>
    </location>
</feature>
<feature type="repeat" description="6">
    <location>
        <begin position="512"/>
        <end position="520"/>
    </location>
</feature>
<feature type="repeat" description="7">
    <location>
        <begin position="521"/>
        <end position="529"/>
    </location>
</feature>
<feature type="repeat" description="8">
    <location>
        <begin position="530"/>
        <end position="538"/>
    </location>
</feature>
<feature type="region of interest" description="Disordered" evidence="4">
    <location>
        <begin position="1"/>
        <end position="44"/>
    </location>
</feature>
<feature type="region of interest" description="Disordered" evidence="4">
    <location>
        <begin position="285"/>
        <end position="390"/>
    </location>
</feature>
<feature type="region of interest" description="Disordered" evidence="4">
    <location>
        <begin position="405"/>
        <end position="580"/>
    </location>
</feature>
<feature type="region of interest" description="8 X approximate tandem repeats">
    <location>
        <begin position="467"/>
        <end position="538"/>
    </location>
</feature>
<feature type="short sequence motif" description="Bipartite nuclear localization signal" evidence="3">
    <location>
        <begin position="257"/>
        <end position="286"/>
    </location>
</feature>
<feature type="compositionally biased region" description="Acidic residues" evidence="4">
    <location>
        <begin position="1"/>
        <end position="38"/>
    </location>
</feature>
<feature type="compositionally biased region" description="Basic and acidic residues" evidence="4">
    <location>
        <begin position="300"/>
        <end position="310"/>
    </location>
</feature>
<feature type="compositionally biased region" description="Basic and acidic residues" evidence="4">
    <location>
        <begin position="352"/>
        <end position="374"/>
    </location>
</feature>
<feature type="compositionally biased region" description="Polar residues" evidence="4">
    <location>
        <begin position="489"/>
        <end position="538"/>
    </location>
</feature>
<feature type="modified residue" description="N-acetylmethionine" evidence="2">
    <location>
        <position position="1"/>
    </location>
</feature>
<feature type="modified residue" description="Phosphoserine" evidence="1">
    <location>
        <position position="327"/>
    </location>
</feature>
<feature type="modified residue" description="Phosphoserine" evidence="2">
    <location>
        <position position="361"/>
    </location>
</feature>
<feature type="modified residue" description="Phosphoserine" evidence="2">
    <location>
        <position position="365"/>
    </location>
</feature>
<feature type="modified residue" description="Phosphoserine" evidence="7">
    <location>
        <position position="403"/>
    </location>
</feature>
<feature type="modified residue" description="Phosphoserine" evidence="7">
    <location>
        <position position="548"/>
    </location>
</feature>
<feature type="modified residue" description="Phosphoserine" evidence="1">
    <location>
        <position position="555"/>
    </location>
</feature>
<proteinExistence type="evidence at protein level"/>
<comment type="function">
    <text>Receptor for opioid growth factor (OGF), also known as Met-enkephalin. Seems to be involved in growth regulation.</text>
</comment>
<comment type="subcellular location">
    <subcellularLocation>
        <location evidence="5">Cytoplasm</location>
        <location evidence="5">Perinuclear region</location>
    </subcellularLocation>
    <subcellularLocation>
        <location evidence="5">Nucleus</location>
    </subcellularLocation>
    <text>The OGF/OGFR complex is probably translocated to the nucleus. Colocalized with OGF in the perinuclear region.</text>
</comment>
<comment type="tissue specificity">
    <text evidence="5">Highly expressed in 6-day old cerebellum and brain. Lower expressed in adult cerebellum. The protein is detected in germinal cells of the cerebellum, in neurons of the deep cerebellar nuclei and in the glia in the medullary layer.</text>
</comment>
<comment type="similarity">
    <text evidence="6">Belongs to the opioid growth factor receptor family.</text>
</comment>
<gene>
    <name type="primary">Ogfr</name>
</gene>